<name>RPIA_SHEPW</name>
<sequence length="218" mass="23250">MTQDEMKKAAGWAALQYVEKDSIVGVGTGSTVNHFIDALATMKADIDGAVSSSEASTEKMKSLGIPVYDLNSVDDLSVYVDGADEINGHMDMIKGGGAALTREKIVAAVADKFICIVDNTKQVDILGEFPLPVEVIPMARSYVARQLVKLGGDPVYREGVVTDNGNIILDVYNMKIMTPKELEEQINAIVGVVTNGLFAMRGADVLLVGTPEGVKTVK</sequence>
<reference key="1">
    <citation type="journal article" date="2008" name="PLoS ONE">
        <title>Environmental adaptation: genomic analysis of the piezotolerant and psychrotolerant deep-sea iron reducing bacterium Shewanella piezotolerans WP3.</title>
        <authorList>
            <person name="Wang F."/>
            <person name="Wang J."/>
            <person name="Jian H."/>
            <person name="Zhang B."/>
            <person name="Li S."/>
            <person name="Wang F."/>
            <person name="Zeng X."/>
            <person name="Gao L."/>
            <person name="Bartlett D.H."/>
            <person name="Yu J."/>
            <person name="Hu S."/>
            <person name="Xiao X."/>
        </authorList>
    </citation>
    <scope>NUCLEOTIDE SEQUENCE [LARGE SCALE GENOMIC DNA]</scope>
    <source>
        <strain>WP3 / JCM 13877</strain>
    </source>
</reference>
<accession>B8CJW7</accession>
<dbReference type="EC" id="5.3.1.6" evidence="1"/>
<dbReference type="EMBL" id="CP000472">
    <property type="protein sequence ID" value="ACJ27670.1"/>
    <property type="molecule type" value="Genomic_DNA"/>
</dbReference>
<dbReference type="RefSeq" id="WP_020911049.1">
    <property type="nucleotide sequence ID" value="NC_011566.1"/>
</dbReference>
<dbReference type="SMR" id="B8CJW7"/>
<dbReference type="STRING" id="225849.swp_0861"/>
<dbReference type="KEGG" id="swp:swp_0861"/>
<dbReference type="eggNOG" id="COG0120">
    <property type="taxonomic scope" value="Bacteria"/>
</dbReference>
<dbReference type="HOGENOM" id="CLU_056590_1_1_6"/>
<dbReference type="OrthoDB" id="5870696at2"/>
<dbReference type="UniPathway" id="UPA00115">
    <property type="reaction ID" value="UER00412"/>
</dbReference>
<dbReference type="Proteomes" id="UP000000753">
    <property type="component" value="Chromosome"/>
</dbReference>
<dbReference type="GO" id="GO:0005829">
    <property type="term" value="C:cytosol"/>
    <property type="evidence" value="ECO:0007669"/>
    <property type="project" value="TreeGrafter"/>
</dbReference>
<dbReference type="GO" id="GO:0004751">
    <property type="term" value="F:ribose-5-phosphate isomerase activity"/>
    <property type="evidence" value="ECO:0007669"/>
    <property type="project" value="UniProtKB-UniRule"/>
</dbReference>
<dbReference type="GO" id="GO:0006014">
    <property type="term" value="P:D-ribose metabolic process"/>
    <property type="evidence" value="ECO:0007669"/>
    <property type="project" value="TreeGrafter"/>
</dbReference>
<dbReference type="GO" id="GO:0009052">
    <property type="term" value="P:pentose-phosphate shunt, non-oxidative branch"/>
    <property type="evidence" value="ECO:0007669"/>
    <property type="project" value="UniProtKB-UniRule"/>
</dbReference>
<dbReference type="CDD" id="cd01398">
    <property type="entry name" value="RPI_A"/>
    <property type="match status" value="1"/>
</dbReference>
<dbReference type="FunFam" id="3.30.70.260:FF:000004">
    <property type="entry name" value="Ribose-5-phosphate isomerase A"/>
    <property type="match status" value="1"/>
</dbReference>
<dbReference type="FunFam" id="3.40.50.1360:FF:000001">
    <property type="entry name" value="Ribose-5-phosphate isomerase A"/>
    <property type="match status" value="1"/>
</dbReference>
<dbReference type="Gene3D" id="3.30.70.260">
    <property type="match status" value="1"/>
</dbReference>
<dbReference type="Gene3D" id="3.40.50.1360">
    <property type="match status" value="1"/>
</dbReference>
<dbReference type="HAMAP" id="MF_00170">
    <property type="entry name" value="Rib_5P_isom_A"/>
    <property type="match status" value="1"/>
</dbReference>
<dbReference type="InterPro" id="IPR037171">
    <property type="entry name" value="NagB/RpiA_transferase-like"/>
</dbReference>
<dbReference type="InterPro" id="IPR020672">
    <property type="entry name" value="Ribose5P_isomerase_typA_subgr"/>
</dbReference>
<dbReference type="InterPro" id="IPR004788">
    <property type="entry name" value="Ribose5P_isomerase_type_A"/>
</dbReference>
<dbReference type="NCBIfam" id="NF001924">
    <property type="entry name" value="PRK00702.1"/>
    <property type="match status" value="1"/>
</dbReference>
<dbReference type="NCBIfam" id="TIGR00021">
    <property type="entry name" value="rpiA"/>
    <property type="match status" value="1"/>
</dbReference>
<dbReference type="PANTHER" id="PTHR11934">
    <property type="entry name" value="RIBOSE-5-PHOSPHATE ISOMERASE"/>
    <property type="match status" value="1"/>
</dbReference>
<dbReference type="PANTHER" id="PTHR11934:SF0">
    <property type="entry name" value="RIBOSE-5-PHOSPHATE ISOMERASE"/>
    <property type="match status" value="1"/>
</dbReference>
<dbReference type="Pfam" id="PF06026">
    <property type="entry name" value="Rib_5-P_isom_A"/>
    <property type="match status" value="1"/>
</dbReference>
<dbReference type="SUPFAM" id="SSF75445">
    <property type="entry name" value="D-ribose-5-phosphate isomerase (RpiA), lid domain"/>
    <property type="match status" value="1"/>
</dbReference>
<dbReference type="SUPFAM" id="SSF100950">
    <property type="entry name" value="NagB/RpiA/CoA transferase-like"/>
    <property type="match status" value="1"/>
</dbReference>
<proteinExistence type="inferred from homology"/>
<feature type="chain" id="PRO_1000194721" description="Ribose-5-phosphate isomerase A">
    <location>
        <begin position="1"/>
        <end position="218"/>
    </location>
</feature>
<feature type="active site" description="Proton acceptor" evidence="1">
    <location>
        <position position="103"/>
    </location>
</feature>
<feature type="binding site" evidence="1">
    <location>
        <begin position="28"/>
        <end position="31"/>
    </location>
    <ligand>
        <name>substrate</name>
    </ligand>
</feature>
<feature type="binding site" evidence="1">
    <location>
        <begin position="81"/>
        <end position="84"/>
    </location>
    <ligand>
        <name>substrate</name>
    </ligand>
</feature>
<feature type="binding site" evidence="1">
    <location>
        <begin position="94"/>
        <end position="97"/>
    </location>
    <ligand>
        <name>substrate</name>
    </ligand>
</feature>
<feature type="binding site" evidence="1">
    <location>
        <position position="121"/>
    </location>
    <ligand>
        <name>substrate</name>
    </ligand>
</feature>
<organism>
    <name type="scientific">Shewanella piezotolerans (strain WP3 / JCM 13877)</name>
    <dbReference type="NCBI Taxonomy" id="225849"/>
    <lineage>
        <taxon>Bacteria</taxon>
        <taxon>Pseudomonadati</taxon>
        <taxon>Pseudomonadota</taxon>
        <taxon>Gammaproteobacteria</taxon>
        <taxon>Alteromonadales</taxon>
        <taxon>Shewanellaceae</taxon>
        <taxon>Shewanella</taxon>
    </lineage>
</organism>
<gene>
    <name evidence="1" type="primary">rpiA</name>
    <name type="ordered locus">swp_0861</name>
</gene>
<protein>
    <recommendedName>
        <fullName evidence="1">Ribose-5-phosphate isomerase A</fullName>
        <ecNumber evidence="1">5.3.1.6</ecNumber>
    </recommendedName>
    <alternativeName>
        <fullName evidence="1">Phosphoriboisomerase A</fullName>
        <shortName evidence="1">PRI</shortName>
    </alternativeName>
</protein>
<keyword id="KW-0413">Isomerase</keyword>
<comment type="function">
    <text evidence="1">Catalyzes the reversible conversion of ribose-5-phosphate to ribulose 5-phosphate.</text>
</comment>
<comment type="catalytic activity">
    <reaction evidence="1">
        <text>aldehydo-D-ribose 5-phosphate = D-ribulose 5-phosphate</text>
        <dbReference type="Rhea" id="RHEA:14657"/>
        <dbReference type="ChEBI" id="CHEBI:58121"/>
        <dbReference type="ChEBI" id="CHEBI:58273"/>
        <dbReference type="EC" id="5.3.1.6"/>
    </reaction>
</comment>
<comment type="pathway">
    <text evidence="1">Carbohydrate degradation; pentose phosphate pathway; D-ribose 5-phosphate from D-ribulose 5-phosphate (non-oxidative stage): step 1/1.</text>
</comment>
<comment type="subunit">
    <text evidence="1">Homodimer.</text>
</comment>
<comment type="similarity">
    <text evidence="1">Belongs to the ribose 5-phosphate isomerase family.</text>
</comment>
<evidence type="ECO:0000255" key="1">
    <source>
        <dbReference type="HAMAP-Rule" id="MF_00170"/>
    </source>
</evidence>